<proteinExistence type="inferred from homology"/>
<keyword id="KW-0012">Acyltransferase</keyword>
<keyword id="KW-0028">Amino-acid biosynthesis</keyword>
<keyword id="KW-0055">Arginine biosynthesis</keyword>
<keyword id="KW-0068">Autocatalytic cleavage</keyword>
<keyword id="KW-0963">Cytoplasm</keyword>
<keyword id="KW-0511">Multifunctional enzyme</keyword>
<keyword id="KW-0808">Transferase</keyword>
<feature type="chain" id="PRO_0000002115" description="Arginine biosynthesis bifunctional protein ArgJ alpha chain" evidence="1">
    <location>
        <begin position="1"/>
        <end position="194"/>
    </location>
</feature>
<feature type="chain" id="PRO_0000002116" description="Arginine biosynthesis bifunctional protein ArgJ beta chain" evidence="1">
    <location>
        <begin position="195"/>
        <end position="408"/>
    </location>
</feature>
<feature type="active site" description="Nucleophile" evidence="1">
    <location>
        <position position="195"/>
    </location>
</feature>
<feature type="binding site" evidence="1">
    <location>
        <position position="158"/>
    </location>
    <ligand>
        <name>substrate</name>
    </ligand>
</feature>
<feature type="binding site" evidence="1">
    <location>
        <position position="184"/>
    </location>
    <ligand>
        <name>substrate</name>
    </ligand>
</feature>
<feature type="binding site" evidence="1">
    <location>
        <position position="195"/>
    </location>
    <ligand>
        <name>substrate</name>
    </ligand>
</feature>
<feature type="binding site" evidence="1">
    <location>
        <position position="281"/>
    </location>
    <ligand>
        <name>substrate</name>
    </ligand>
</feature>
<feature type="binding site" evidence="1">
    <location>
        <position position="403"/>
    </location>
    <ligand>
        <name>substrate</name>
    </ligand>
</feature>
<feature type="binding site" evidence="1">
    <location>
        <position position="408"/>
    </location>
    <ligand>
        <name>substrate</name>
    </ligand>
</feature>
<feature type="site" description="Involved in the stabilization of negative charge on the oxyanion by the formation of the oxyanion hole" evidence="1">
    <location>
        <position position="121"/>
    </location>
</feature>
<feature type="site" description="Involved in the stabilization of negative charge on the oxyanion by the formation of the oxyanion hole" evidence="1">
    <location>
        <position position="122"/>
    </location>
</feature>
<feature type="site" description="Cleavage; by autolysis" evidence="1">
    <location>
        <begin position="194"/>
        <end position="195"/>
    </location>
</feature>
<name>ARGJ_BACHK</name>
<evidence type="ECO:0000255" key="1">
    <source>
        <dbReference type="HAMAP-Rule" id="MF_01106"/>
    </source>
</evidence>
<protein>
    <recommendedName>
        <fullName evidence="1">Arginine biosynthesis bifunctional protein ArgJ</fullName>
    </recommendedName>
    <domain>
        <recommendedName>
            <fullName evidence="1">Glutamate N-acetyltransferase</fullName>
            <ecNumber evidence="1">2.3.1.35</ecNumber>
        </recommendedName>
        <alternativeName>
            <fullName evidence="1">Ornithine acetyltransferase</fullName>
            <shortName evidence="1">OATase</shortName>
        </alternativeName>
        <alternativeName>
            <fullName evidence="1">Ornithine transacetylase</fullName>
        </alternativeName>
    </domain>
    <domain>
        <recommendedName>
            <fullName evidence="1">Amino-acid acetyltransferase</fullName>
            <ecNumber evidence="1">2.3.1.1</ecNumber>
        </recommendedName>
        <alternativeName>
            <fullName evidence="1">N-acetylglutamate synthase</fullName>
            <shortName evidence="1">AGSase</shortName>
        </alternativeName>
    </domain>
    <component>
        <recommendedName>
            <fullName evidence="1">Arginine biosynthesis bifunctional protein ArgJ alpha chain</fullName>
        </recommendedName>
    </component>
    <component>
        <recommendedName>
            <fullName evidence="1">Arginine biosynthesis bifunctional protein ArgJ beta chain</fullName>
        </recommendedName>
    </component>
</protein>
<reference key="1">
    <citation type="journal article" date="2006" name="J. Bacteriol.">
        <title>Pathogenomic sequence analysis of Bacillus cereus and Bacillus thuringiensis isolates closely related to Bacillus anthracis.</title>
        <authorList>
            <person name="Han C.S."/>
            <person name="Xie G."/>
            <person name="Challacombe J.F."/>
            <person name="Altherr M.R."/>
            <person name="Bhotika S.S."/>
            <person name="Bruce D."/>
            <person name="Campbell C.S."/>
            <person name="Campbell M.L."/>
            <person name="Chen J."/>
            <person name="Chertkov O."/>
            <person name="Cleland C."/>
            <person name="Dimitrijevic M."/>
            <person name="Doggett N.A."/>
            <person name="Fawcett J.J."/>
            <person name="Glavina T."/>
            <person name="Goodwin L.A."/>
            <person name="Hill K.K."/>
            <person name="Hitchcock P."/>
            <person name="Jackson P.J."/>
            <person name="Keim P."/>
            <person name="Kewalramani A.R."/>
            <person name="Longmire J."/>
            <person name="Lucas S."/>
            <person name="Malfatti S."/>
            <person name="McMurry K."/>
            <person name="Meincke L.J."/>
            <person name="Misra M."/>
            <person name="Moseman B.L."/>
            <person name="Mundt M."/>
            <person name="Munk A.C."/>
            <person name="Okinaka R.T."/>
            <person name="Parson-Quintana B."/>
            <person name="Reilly L.P."/>
            <person name="Richardson P."/>
            <person name="Robinson D.L."/>
            <person name="Rubin E."/>
            <person name="Saunders E."/>
            <person name="Tapia R."/>
            <person name="Tesmer J.G."/>
            <person name="Thayer N."/>
            <person name="Thompson L.S."/>
            <person name="Tice H."/>
            <person name="Ticknor L.O."/>
            <person name="Wills P.L."/>
            <person name="Brettin T.S."/>
            <person name="Gilna P."/>
        </authorList>
    </citation>
    <scope>NUCLEOTIDE SEQUENCE [LARGE SCALE GENOMIC DNA]</scope>
    <source>
        <strain>97-27</strain>
    </source>
</reference>
<dbReference type="EC" id="2.3.1.35" evidence="1"/>
<dbReference type="EC" id="2.3.1.1" evidence="1"/>
<dbReference type="EMBL" id="AE017355">
    <property type="protein sequence ID" value="AAT60754.1"/>
    <property type="molecule type" value="Genomic_DNA"/>
</dbReference>
<dbReference type="RefSeq" id="YP_038197.1">
    <property type="nucleotide sequence ID" value="NC_005957.1"/>
</dbReference>
<dbReference type="SMR" id="Q6HE29"/>
<dbReference type="MEROPS" id="T05.002"/>
<dbReference type="KEGG" id="btk:BT9727_3878"/>
<dbReference type="PATRIC" id="fig|281309.8.peg.4136"/>
<dbReference type="HOGENOM" id="CLU_027172_1_0_9"/>
<dbReference type="UniPathway" id="UPA00068">
    <property type="reaction ID" value="UER00106"/>
</dbReference>
<dbReference type="UniPathway" id="UPA00068">
    <property type="reaction ID" value="UER00111"/>
</dbReference>
<dbReference type="Proteomes" id="UP000001301">
    <property type="component" value="Chromosome"/>
</dbReference>
<dbReference type="GO" id="GO:0005737">
    <property type="term" value="C:cytoplasm"/>
    <property type="evidence" value="ECO:0007669"/>
    <property type="project" value="UniProtKB-SubCell"/>
</dbReference>
<dbReference type="GO" id="GO:0004358">
    <property type="term" value="F:glutamate N-acetyltransferase activity"/>
    <property type="evidence" value="ECO:0007669"/>
    <property type="project" value="UniProtKB-UniRule"/>
</dbReference>
<dbReference type="GO" id="GO:0004042">
    <property type="term" value="F:L-glutamate N-acetyltransferase activity"/>
    <property type="evidence" value="ECO:0007669"/>
    <property type="project" value="UniProtKB-UniRule"/>
</dbReference>
<dbReference type="GO" id="GO:0006526">
    <property type="term" value="P:L-arginine biosynthetic process"/>
    <property type="evidence" value="ECO:0007669"/>
    <property type="project" value="UniProtKB-UniRule"/>
</dbReference>
<dbReference type="GO" id="GO:0006592">
    <property type="term" value="P:ornithine biosynthetic process"/>
    <property type="evidence" value="ECO:0007669"/>
    <property type="project" value="TreeGrafter"/>
</dbReference>
<dbReference type="CDD" id="cd02152">
    <property type="entry name" value="OAT"/>
    <property type="match status" value="1"/>
</dbReference>
<dbReference type="FunFam" id="3.10.20.340:FF:000001">
    <property type="entry name" value="Arginine biosynthesis bifunctional protein ArgJ, chloroplastic"/>
    <property type="match status" value="1"/>
</dbReference>
<dbReference type="FunFam" id="3.60.70.12:FF:000001">
    <property type="entry name" value="Arginine biosynthesis bifunctional protein ArgJ, chloroplastic"/>
    <property type="match status" value="1"/>
</dbReference>
<dbReference type="FunFam" id="3.30.2330.10:FF:000001">
    <property type="entry name" value="Arginine biosynthesis bifunctional protein ArgJ, mitochondrial"/>
    <property type="match status" value="1"/>
</dbReference>
<dbReference type="Gene3D" id="3.30.2330.10">
    <property type="entry name" value="arginine biosynthesis bifunctional protein suprefamily"/>
    <property type="match status" value="1"/>
</dbReference>
<dbReference type="Gene3D" id="3.10.20.340">
    <property type="entry name" value="ArgJ beta chain, C-terminal domain"/>
    <property type="match status" value="1"/>
</dbReference>
<dbReference type="Gene3D" id="3.60.70.12">
    <property type="entry name" value="L-amino peptidase D-ALA esterase/amidase"/>
    <property type="match status" value="1"/>
</dbReference>
<dbReference type="HAMAP" id="MF_01106">
    <property type="entry name" value="ArgJ"/>
    <property type="match status" value="1"/>
</dbReference>
<dbReference type="InterPro" id="IPR002813">
    <property type="entry name" value="Arg_biosynth_ArgJ"/>
</dbReference>
<dbReference type="InterPro" id="IPR016117">
    <property type="entry name" value="ArgJ-like_dom_sf"/>
</dbReference>
<dbReference type="InterPro" id="IPR042195">
    <property type="entry name" value="ArgJ_beta_C"/>
</dbReference>
<dbReference type="NCBIfam" id="TIGR00120">
    <property type="entry name" value="ArgJ"/>
    <property type="match status" value="1"/>
</dbReference>
<dbReference type="NCBIfam" id="NF003802">
    <property type="entry name" value="PRK05388.1"/>
    <property type="match status" value="1"/>
</dbReference>
<dbReference type="PANTHER" id="PTHR23100">
    <property type="entry name" value="ARGININE BIOSYNTHESIS BIFUNCTIONAL PROTEIN ARGJ"/>
    <property type="match status" value="1"/>
</dbReference>
<dbReference type="PANTHER" id="PTHR23100:SF0">
    <property type="entry name" value="ARGININE BIOSYNTHESIS BIFUNCTIONAL PROTEIN ARGJ, MITOCHONDRIAL"/>
    <property type="match status" value="1"/>
</dbReference>
<dbReference type="Pfam" id="PF01960">
    <property type="entry name" value="ArgJ"/>
    <property type="match status" value="1"/>
</dbReference>
<dbReference type="SUPFAM" id="SSF56266">
    <property type="entry name" value="DmpA/ArgJ-like"/>
    <property type="match status" value="1"/>
</dbReference>
<comment type="function">
    <text evidence="1">Catalyzes two activities which are involved in the cyclic version of arginine biosynthesis: the synthesis of N-acetylglutamate from glutamate and acetyl-CoA as the acetyl donor, and of ornithine by transacetylation between N(2)-acetylornithine and glutamate.</text>
</comment>
<comment type="catalytic activity">
    <reaction evidence="1">
        <text>N(2)-acetyl-L-ornithine + L-glutamate = N-acetyl-L-glutamate + L-ornithine</text>
        <dbReference type="Rhea" id="RHEA:15349"/>
        <dbReference type="ChEBI" id="CHEBI:29985"/>
        <dbReference type="ChEBI" id="CHEBI:44337"/>
        <dbReference type="ChEBI" id="CHEBI:46911"/>
        <dbReference type="ChEBI" id="CHEBI:57805"/>
        <dbReference type="EC" id="2.3.1.35"/>
    </reaction>
</comment>
<comment type="catalytic activity">
    <reaction evidence="1">
        <text>L-glutamate + acetyl-CoA = N-acetyl-L-glutamate + CoA + H(+)</text>
        <dbReference type="Rhea" id="RHEA:24292"/>
        <dbReference type="ChEBI" id="CHEBI:15378"/>
        <dbReference type="ChEBI" id="CHEBI:29985"/>
        <dbReference type="ChEBI" id="CHEBI:44337"/>
        <dbReference type="ChEBI" id="CHEBI:57287"/>
        <dbReference type="ChEBI" id="CHEBI:57288"/>
        <dbReference type="EC" id="2.3.1.1"/>
    </reaction>
</comment>
<comment type="pathway">
    <text evidence="1">Amino-acid biosynthesis; L-arginine biosynthesis; L-ornithine and N-acetyl-L-glutamate from L-glutamate and N(2)-acetyl-L-ornithine (cyclic): step 1/1.</text>
</comment>
<comment type="pathway">
    <text evidence="1">Amino-acid biosynthesis; L-arginine biosynthesis; N(2)-acetyl-L-ornithine from L-glutamate: step 1/4.</text>
</comment>
<comment type="subunit">
    <text evidence="1">Heterotetramer of two alpha and two beta chains.</text>
</comment>
<comment type="subcellular location">
    <subcellularLocation>
        <location evidence="1">Cytoplasm</location>
    </subcellularLocation>
</comment>
<comment type="similarity">
    <text evidence="1">Belongs to the ArgJ family.</text>
</comment>
<sequence length="408" mass="44024">MMIKIASITKVENGSIVTPKGFSAIGTAIGLKKEKKDLGAIVCDVPASCAAVYTTNQIQAAPLQVTKDSITTERKLQAIIVNSGNANACTGMKGLQDAYEMRVLGAEHFGVKENYVAVASTGVIGVPLPMDIIRKGIATLIPAKEENEAHSFSEAILTTDLITKETCYEMSIDGKKVMIAGVAKGSGMIHPNMATMLSFITTDAHIEHDVLQTALSQITNHTFNQITVDGDTSTNDMVIAMASGLSETKPINMEHADWETFVFALQKVCEDLAKKIAQDGEGATKLIEVNVLGAQTNEEAKKIAKQIVGSSLVKTAIHGEDPNWGRIISSIGQSEVAINPNTIEITLQSIAVLKNSEPQTFSEEEMKERLQEDEIVINVYLHLGEETGSAWGCDLSYEYVKINACYRT</sequence>
<gene>
    <name evidence="1" type="primary">argJ</name>
    <name type="ordered locus">BT9727_3878</name>
</gene>
<organism>
    <name type="scientific">Bacillus thuringiensis subsp. konkukian (strain 97-27)</name>
    <dbReference type="NCBI Taxonomy" id="281309"/>
    <lineage>
        <taxon>Bacteria</taxon>
        <taxon>Bacillati</taxon>
        <taxon>Bacillota</taxon>
        <taxon>Bacilli</taxon>
        <taxon>Bacillales</taxon>
        <taxon>Bacillaceae</taxon>
        <taxon>Bacillus</taxon>
        <taxon>Bacillus cereus group</taxon>
    </lineage>
</organism>
<accession>Q6HE29</accession>